<evidence type="ECO:0000255" key="1">
    <source>
        <dbReference type="HAMAP-Rule" id="MF_02113"/>
    </source>
</evidence>
<name>PSB1_CALMQ</name>
<dbReference type="EC" id="3.4.25.1" evidence="1"/>
<dbReference type="EMBL" id="CP000852">
    <property type="protein sequence ID" value="ABW01303.1"/>
    <property type="molecule type" value="Genomic_DNA"/>
</dbReference>
<dbReference type="RefSeq" id="WP_012185523.1">
    <property type="nucleotide sequence ID" value="NC_009954.1"/>
</dbReference>
<dbReference type="SMR" id="A8MBW0"/>
<dbReference type="STRING" id="397948.Cmaq_0458"/>
<dbReference type="MEROPS" id="T01.002"/>
<dbReference type="GeneID" id="5709933"/>
<dbReference type="KEGG" id="cma:Cmaq_0458"/>
<dbReference type="eggNOG" id="arCOG00970">
    <property type="taxonomic scope" value="Archaea"/>
</dbReference>
<dbReference type="HOGENOM" id="CLU_035750_7_2_2"/>
<dbReference type="OrthoDB" id="6330at2157"/>
<dbReference type="Proteomes" id="UP000001137">
    <property type="component" value="Chromosome"/>
</dbReference>
<dbReference type="GO" id="GO:0005737">
    <property type="term" value="C:cytoplasm"/>
    <property type="evidence" value="ECO:0007669"/>
    <property type="project" value="UniProtKB-SubCell"/>
</dbReference>
<dbReference type="GO" id="GO:0019774">
    <property type="term" value="C:proteasome core complex, beta-subunit complex"/>
    <property type="evidence" value="ECO:0007669"/>
    <property type="project" value="UniProtKB-UniRule"/>
</dbReference>
<dbReference type="GO" id="GO:0004298">
    <property type="term" value="F:threonine-type endopeptidase activity"/>
    <property type="evidence" value="ECO:0007669"/>
    <property type="project" value="UniProtKB-UniRule"/>
</dbReference>
<dbReference type="GO" id="GO:0010498">
    <property type="term" value="P:proteasomal protein catabolic process"/>
    <property type="evidence" value="ECO:0007669"/>
    <property type="project" value="UniProtKB-UniRule"/>
</dbReference>
<dbReference type="Gene3D" id="3.60.20.10">
    <property type="entry name" value="Glutamine Phosphoribosylpyrophosphate, subunit 1, domain 1"/>
    <property type="match status" value="1"/>
</dbReference>
<dbReference type="HAMAP" id="MF_02113_A">
    <property type="entry name" value="Proteasome_B_A"/>
    <property type="match status" value="1"/>
</dbReference>
<dbReference type="InterPro" id="IPR029055">
    <property type="entry name" value="Ntn_hydrolases_N"/>
</dbReference>
<dbReference type="InterPro" id="IPR019983">
    <property type="entry name" value="Pept_T1A_Psome_bsu_arc"/>
</dbReference>
<dbReference type="InterPro" id="IPR000243">
    <property type="entry name" value="Pept_T1A_subB"/>
</dbReference>
<dbReference type="InterPro" id="IPR001353">
    <property type="entry name" value="Proteasome_sua/b"/>
</dbReference>
<dbReference type="InterPro" id="IPR023333">
    <property type="entry name" value="Proteasome_suB-type"/>
</dbReference>
<dbReference type="PANTHER" id="PTHR32194:SF0">
    <property type="entry name" value="ATP-DEPENDENT PROTEASE SUBUNIT HSLV"/>
    <property type="match status" value="1"/>
</dbReference>
<dbReference type="PANTHER" id="PTHR32194">
    <property type="entry name" value="METALLOPROTEASE TLDD"/>
    <property type="match status" value="1"/>
</dbReference>
<dbReference type="Pfam" id="PF00227">
    <property type="entry name" value="Proteasome"/>
    <property type="match status" value="1"/>
</dbReference>
<dbReference type="PRINTS" id="PR00141">
    <property type="entry name" value="PROTEASOME"/>
</dbReference>
<dbReference type="SUPFAM" id="SSF56235">
    <property type="entry name" value="N-terminal nucleophile aminohydrolases (Ntn hydrolases)"/>
    <property type="match status" value="1"/>
</dbReference>
<dbReference type="PROSITE" id="PS51476">
    <property type="entry name" value="PROTEASOME_BETA_2"/>
    <property type="match status" value="1"/>
</dbReference>
<protein>
    <recommendedName>
        <fullName evidence="1">Proteasome subunit beta 1</fullName>
        <ecNumber evidence="1">3.4.25.1</ecNumber>
    </recommendedName>
    <alternativeName>
        <fullName evidence="1">20S proteasome beta subunit 1</fullName>
    </alternativeName>
    <alternativeName>
        <fullName evidence="1">Proteasome core protein PsmB 1</fullName>
    </alternativeName>
</protein>
<gene>
    <name evidence="1" type="primary">psmB1</name>
    <name type="ordered locus">Cmaq_0458</name>
</gene>
<feature type="propeptide" id="PRO_0000397282" description="Removed in mature form; by autocatalysis" evidence="1">
    <location>
        <begin position="1"/>
        <end position="14"/>
    </location>
</feature>
<feature type="chain" id="PRO_0000397283" description="Proteasome subunit beta 1">
    <location>
        <begin position="15"/>
        <end position="206"/>
    </location>
</feature>
<feature type="active site" description="Nucleophile" evidence="1">
    <location>
        <position position="15"/>
    </location>
</feature>
<accession>A8MBW0</accession>
<reference key="1">
    <citation type="submission" date="2007-10" db="EMBL/GenBank/DDBJ databases">
        <title>Complete sequence of Caldivirga maquilingensis IC-167.</title>
        <authorList>
            <consortium name="US DOE Joint Genome Institute"/>
            <person name="Copeland A."/>
            <person name="Lucas S."/>
            <person name="Lapidus A."/>
            <person name="Barry K."/>
            <person name="Glavina del Rio T."/>
            <person name="Dalin E."/>
            <person name="Tice H."/>
            <person name="Pitluck S."/>
            <person name="Saunders E."/>
            <person name="Brettin T."/>
            <person name="Bruce D."/>
            <person name="Detter J.C."/>
            <person name="Han C."/>
            <person name="Schmutz J."/>
            <person name="Larimer F."/>
            <person name="Land M."/>
            <person name="Hauser L."/>
            <person name="Kyrpides N."/>
            <person name="Ivanova N."/>
            <person name="Biddle J.F."/>
            <person name="Zhang Z."/>
            <person name="Fitz-Gibbon S.T."/>
            <person name="Lowe T.M."/>
            <person name="Saltikov C."/>
            <person name="House C.H."/>
            <person name="Richardson P."/>
        </authorList>
    </citation>
    <scope>NUCLEOTIDE SEQUENCE [LARGE SCALE GENOMIC DNA]</scope>
    <source>
        <strain>ATCC 700844 / DSM 13496 / JCM 10307 / IC-167</strain>
    </source>
</reference>
<sequence>MSRIHNDPKVLLTGTTTVGVVTKEGVVLATDRRVTAGYYIAHRKGRKIWKIDNHAAATMSGAVADVQMILNELTHLAMNYRITHQAPVPIKTLANYASVVMFYSRPMIYIAHMIIGGVDNEEGPVLYAVDWYGSFTREERFMSTGSGSPTAFGVLEDGYRDDMSLDDAVKLATRAVRAAMLHDPGSGEGVDVITITKEAGYREVQA</sequence>
<keyword id="KW-0068">Autocatalytic cleavage</keyword>
<keyword id="KW-0963">Cytoplasm</keyword>
<keyword id="KW-0378">Hydrolase</keyword>
<keyword id="KW-0645">Protease</keyword>
<keyword id="KW-0647">Proteasome</keyword>
<keyword id="KW-1185">Reference proteome</keyword>
<keyword id="KW-0888">Threonine protease</keyword>
<keyword id="KW-0865">Zymogen</keyword>
<comment type="function">
    <text evidence="1">Component of the proteasome core, a large protease complex with broad specificity involved in protein degradation.</text>
</comment>
<comment type="catalytic activity">
    <reaction evidence="1">
        <text>Cleavage of peptide bonds with very broad specificity.</text>
        <dbReference type="EC" id="3.4.25.1"/>
    </reaction>
</comment>
<comment type="activity regulation">
    <text evidence="1">The formation of the proteasomal ATPase PAN-20S proteasome complex, via the docking of the C-termini of PAN into the intersubunit pockets in the alpha-rings, triggers opening of the gate for substrate entry. Interconversion between the open-gate and close-gate conformations leads to a dynamic regulation of the 20S proteasome proteolysis activity.</text>
</comment>
<comment type="subunit">
    <text evidence="1">The 20S proteasome core is composed of 14 alpha and 14 beta subunits that assemble into four stacked heptameric rings, resulting in a barrel-shaped structure. The two inner rings, each composed of seven catalytic beta subunits, are sandwiched by two outer rings, each composed of seven alpha subunits. The catalytic chamber with the active sites is on the inside of the barrel. Has a gated structure, the ends of the cylinder being occluded by the N-termini of the alpha-subunits. Is capped at one or both ends by the proteasome regulatory ATPase, PAN.</text>
</comment>
<comment type="subcellular location">
    <subcellularLocation>
        <location evidence="1">Cytoplasm</location>
    </subcellularLocation>
</comment>
<comment type="similarity">
    <text evidence="1">Belongs to the peptidase T1B family.</text>
</comment>
<proteinExistence type="inferred from homology"/>
<organism>
    <name type="scientific">Caldivirga maquilingensis (strain ATCC 700844 / DSM 13496 / JCM 10307 / IC-167)</name>
    <dbReference type="NCBI Taxonomy" id="397948"/>
    <lineage>
        <taxon>Archaea</taxon>
        <taxon>Thermoproteota</taxon>
        <taxon>Thermoprotei</taxon>
        <taxon>Thermoproteales</taxon>
        <taxon>Thermoproteaceae</taxon>
        <taxon>Caldivirga</taxon>
    </lineage>
</organism>